<name>SEA_AVIET</name>
<protein>
    <recommendedName>
        <fullName>Tyrosine-protein kinase transforming protein SEA</fullName>
        <ecNumber>2.7.10.2</ecNumber>
    </recommendedName>
</protein>
<feature type="chain" id="PRO_0000088136" description="Tyrosine-protein kinase transforming protein SEA">
    <location>
        <begin position="1"/>
        <end position="370"/>
    </location>
</feature>
<feature type="domain" description="Protein kinase" evidence="2">
    <location>
        <begin position="60"/>
        <end position="323"/>
    </location>
</feature>
<feature type="region of interest" description="Disordered" evidence="4">
    <location>
        <begin position="345"/>
        <end position="370"/>
    </location>
</feature>
<feature type="compositionally biased region" description="Acidic residues" evidence="4">
    <location>
        <begin position="357"/>
        <end position="370"/>
    </location>
</feature>
<feature type="active site" description="Proton acceptor" evidence="2 3">
    <location>
        <position position="186"/>
    </location>
</feature>
<feature type="binding site" evidence="2">
    <location>
        <begin position="66"/>
        <end position="74"/>
    </location>
    <ligand>
        <name>ATP</name>
        <dbReference type="ChEBI" id="CHEBI:30616"/>
    </ligand>
</feature>
<feature type="binding site" evidence="2">
    <location>
        <position position="92"/>
    </location>
    <ligand>
        <name>ATP</name>
        <dbReference type="ChEBI" id="CHEBI:30616"/>
    </ligand>
</feature>
<feature type="modified residue" description="Phosphotyrosine; by autocatalysis" evidence="1">
    <location>
        <position position="216"/>
    </location>
</feature>
<dbReference type="EC" id="2.7.10.2"/>
<dbReference type="EMBL" id="M25158">
    <property type="protein sequence ID" value="AAA42392.1"/>
    <property type="status" value="ALT_INIT"/>
    <property type="molecule type" value="Genomic_RNA"/>
</dbReference>
<dbReference type="SMR" id="P23049"/>
<dbReference type="BRENDA" id="2.7.10.2">
    <property type="organism ID" value="589"/>
</dbReference>
<dbReference type="GO" id="GO:0005886">
    <property type="term" value="C:plasma membrane"/>
    <property type="evidence" value="ECO:0007669"/>
    <property type="project" value="TreeGrafter"/>
</dbReference>
<dbReference type="GO" id="GO:0043235">
    <property type="term" value="C:receptor complex"/>
    <property type="evidence" value="ECO:0007669"/>
    <property type="project" value="TreeGrafter"/>
</dbReference>
<dbReference type="GO" id="GO:0005524">
    <property type="term" value="F:ATP binding"/>
    <property type="evidence" value="ECO:0007669"/>
    <property type="project" value="UniProtKB-KW"/>
</dbReference>
<dbReference type="GO" id="GO:0004715">
    <property type="term" value="F:non-membrane spanning protein tyrosine kinase activity"/>
    <property type="evidence" value="ECO:0007669"/>
    <property type="project" value="UniProtKB-EC"/>
</dbReference>
<dbReference type="GO" id="GO:0004714">
    <property type="term" value="F:transmembrane receptor protein tyrosine kinase activity"/>
    <property type="evidence" value="ECO:0007669"/>
    <property type="project" value="TreeGrafter"/>
</dbReference>
<dbReference type="GO" id="GO:0016477">
    <property type="term" value="P:cell migration"/>
    <property type="evidence" value="ECO:0007669"/>
    <property type="project" value="TreeGrafter"/>
</dbReference>
<dbReference type="GO" id="GO:0007169">
    <property type="term" value="P:cell surface receptor protein tyrosine kinase signaling pathway"/>
    <property type="evidence" value="ECO:0007669"/>
    <property type="project" value="TreeGrafter"/>
</dbReference>
<dbReference type="GO" id="GO:0006909">
    <property type="term" value="P:phagocytosis"/>
    <property type="evidence" value="ECO:0007669"/>
    <property type="project" value="TreeGrafter"/>
</dbReference>
<dbReference type="FunFam" id="1.10.510.10:FF:000093">
    <property type="entry name" value="Hepatocyte growth factor receptor"/>
    <property type="match status" value="1"/>
</dbReference>
<dbReference type="FunFam" id="3.30.200.20:FF:000188">
    <property type="entry name" value="Hepatocyte growth factor receptor"/>
    <property type="match status" value="1"/>
</dbReference>
<dbReference type="Gene3D" id="3.30.200.20">
    <property type="entry name" value="Phosphorylase Kinase, domain 1"/>
    <property type="match status" value="1"/>
</dbReference>
<dbReference type="Gene3D" id="1.10.510.10">
    <property type="entry name" value="Transferase(Phosphotransferase) domain 1"/>
    <property type="match status" value="1"/>
</dbReference>
<dbReference type="InterPro" id="IPR011009">
    <property type="entry name" value="Kinase-like_dom_sf"/>
</dbReference>
<dbReference type="InterPro" id="IPR000719">
    <property type="entry name" value="Prot_kinase_dom"/>
</dbReference>
<dbReference type="InterPro" id="IPR017441">
    <property type="entry name" value="Protein_kinase_ATP_BS"/>
</dbReference>
<dbReference type="InterPro" id="IPR050122">
    <property type="entry name" value="RTK"/>
</dbReference>
<dbReference type="InterPro" id="IPR001245">
    <property type="entry name" value="Ser-Thr/Tyr_kinase_cat_dom"/>
</dbReference>
<dbReference type="InterPro" id="IPR008266">
    <property type="entry name" value="Tyr_kinase_AS"/>
</dbReference>
<dbReference type="InterPro" id="IPR020635">
    <property type="entry name" value="Tyr_kinase_cat_dom"/>
</dbReference>
<dbReference type="PANTHER" id="PTHR24416:SF564">
    <property type="entry name" value="MACROPHAGE-STIMULATING PROTEIN RECEPTOR"/>
    <property type="match status" value="1"/>
</dbReference>
<dbReference type="PANTHER" id="PTHR24416">
    <property type="entry name" value="TYROSINE-PROTEIN KINASE RECEPTOR"/>
    <property type="match status" value="1"/>
</dbReference>
<dbReference type="Pfam" id="PF07714">
    <property type="entry name" value="PK_Tyr_Ser-Thr"/>
    <property type="match status" value="1"/>
</dbReference>
<dbReference type="PRINTS" id="PR00109">
    <property type="entry name" value="TYRKINASE"/>
</dbReference>
<dbReference type="SMART" id="SM00219">
    <property type="entry name" value="TyrKc"/>
    <property type="match status" value="1"/>
</dbReference>
<dbReference type="SUPFAM" id="SSF56112">
    <property type="entry name" value="Protein kinase-like (PK-like)"/>
    <property type="match status" value="1"/>
</dbReference>
<dbReference type="PROSITE" id="PS00107">
    <property type="entry name" value="PROTEIN_KINASE_ATP"/>
    <property type="match status" value="1"/>
</dbReference>
<dbReference type="PROSITE" id="PS50011">
    <property type="entry name" value="PROTEIN_KINASE_DOM"/>
    <property type="match status" value="1"/>
</dbReference>
<dbReference type="PROSITE" id="PS00109">
    <property type="entry name" value="PROTEIN_KINASE_TYR"/>
    <property type="match status" value="1"/>
</dbReference>
<evidence type="ECO:0000250" key="1"/>
<evidence type="ECO:0000255" key="2">
    <source>
        <dbReference type="PROSITE-ProRule" id="PRU00159"/>
    </source>
</evidence>
<evidence type="ECO:0000255" key="3">
    <source>
        <dbReference type="PROSITE-ProRule" id="PRU10028"/>
    </source>
</evidence>
<evidence type="ECO:0000256" key="4">
    <source>
        <dbReference type="SAM" id="MobiDB-lite"/>
    </source>
</evidence>
<evidence type="ECO:0000305" key="5"/>
<sequence>ADSPGLARPHAHFASAGADAAGGGSPVLLLRTTSCCLEDLRPELLEEVKDILIPEERLITHRSRVIGRGHFGSVYHGTYMDPLLGNLHCAVKSLHRITYLEEVEEFLREGILMKGFHHPQVLSLLGVCLPRHGLPLVVLPYMRHGDLRHFVRAQERSPTVKELIGFGLQVALGMEYLAQKKFVHRDLAARNCMLDETLTVKVADFGLARDVFGKEYYSIRQHRHAKLPVRWMALESLQTQKFTTKSDVWSFGVLMWELLTRGASPYPEVDPYDMARYLLRGRRLPQPQPCPDTLYGVMLSCWAPTPEERPSFSGLVCELERVLASLEGEHYINMAVTYVNLESGPPFPPAPRGQLPDSEDEEDEEEEVAE</sequence>
<accession>P23049</accession>
<accession>Q85458</accession>
<accession>Q85459</accession>
<keyword id="KW-0067">ATP-binding</keyword>
<keyword id="KW-0418">Kinase</keyword>
<keyword id="KW-0547">Nucleotide-binding</keyword>
<keyword id="KW-0553">Oncogene</keyword>
<keyword id="KW-0597">Phosphoprotein</keyword>
<keyword id="KW-0808">Transferase</keyword>
<keyword id="KW-0829">Tyrosine-protein kinase</keyword>
<proteinExistence type="inferred from homology"/>
<comment type="catalytic activity">
    <reaction evidence="3">
        <text>L-tyrosyl-[protein] + ATP = O-phospho-L-tyrosyl-[protein] + ADP + H(+)</text>
        <dbReference type="Rhea" id="RHEA:10596"/>
        <dbReference type="Rhea" id="RHEA-COMP:10136"/>
        <dbReference type="Rhea" id="RHEA-COMP:20101"/>
        <dbReference type="ChEBI" id="CHEBI:15378"/>
        <dbReference type="ChEBI" id="CHEBI:30616"/>
        <dbReference type="ChEBI" id="CHEBI:46858"/>
        <dbReference type="ChEBI" id="CHEBI:61978"/>
        <dbReference type="ChEBI" id="CHEBI:456216"/>
        <dbReference type="EC" id="2.7.10.2"/>
    </reaction>
</comment>
<comment type="miscellaneous">
    <text>This protein is synthesized as an Env-Sea polyprotein.</text>
</comment>
<comment type="similarity">
    <text evidence="2">Belongs to the protein kinase superfamily. Tyr protein kinase family.</text>
</comment>
<comment type="sequence caution" evidence="5">
    <conflict type="erroneous initiation">
        <sequence resource="EMBL-CDS" id="AAA42392"/>
    </conflict>
</comment>
<reference key="1">
    <citation type="journal article" date="1989" name="Proc. Natl. Acad. Sci. U.S.A.">
        <title>The v-sea oncogene of avian erythroblastosis retrovirus S13: another member of the protein-tyrosine kinase gene family.</title>
        <authorList>
            <person name="Smith D.R."/>
            <person name="Vogt P.K."/>
            <person name="Hayman M.J."/>
        </authorList>
    </citation>
    <scope>NUCLEOTIDE SEQUENCE [GENOMIC RNA]</scope>
</reference>
<organismHost>
    <name type="scientific">Galliformes</name>
    <dbReference type="NCBI Taxonomy" id="8976"/>
</organismHost>
<gene>
    <name type="primary">V-SEA</name>
</gene>
<organism>
    <name type="scientific">Avian erythroblastosis virus (strain S13)</name>
    <dbReference type="NCBI Taxonomy" id="11863"/>
    <lineage>
        <taxon>Viruses</taxon>
        <taxon>Riboviria</taxon>
        <taxon>Pararnavirae</taxon>
        <taxon>Artverviricota</taxon>
        <taxon>Revtraviricetes</taxon>
        <taxon>Ortervirales</taxon>
        <taxon>Retroviridae</taxon>
        <taxon>Orthoretrovirinae</taxon>
        <taxon>Alpharetrovirus</taxon>
        <taxon>Avian leukosis virus</taxon>
    </lineage>
</organism>